<geneLocation type="chloroplast"/>
<reference key="1">
    <citation type="journal article" date="2008" name="J. Mol. Evol.">
        <title>Complete sequence of the Duckweed (Lemna minor) chloroplast genome: structural organization and phylogenetic relationships to other angiosperms.</title>
        <authorList>
            <person name="Mardanov A.V."/>
            <person name="Ravin N.V."/>
            <person name="Kuznetsov B.B."/>
            <person name="Samigullin T.H."/>
            <person name="Antonov A.S."/>
            <person name="Kolganova T.V."/>
            <person name="Skyabin K.G."/>
        </authorList>
    </citation>
    <scope>NUCLEOTIDE SEQUENCE [LARGE SCALE GENOMIC DNA]</scope>
</reference>
<protein>
    <recommendedName>
        <fullName evidence="1">Photosystem I assembly protein Ycf3</fullName>
    </recommendedName>
</protein>
<proteinExistence type="inferred from homology"/>
<accession>A9L997</accession>
<keyword id="KW-0150">Chloroplast</keyword>
<keyword id="KW-0472">Membrane</keyword>
<keyword id="KW-0602">Photosynthesis</keyword>
<keyword id="KW-0934">Plastid</keyword>
<keyword id="KW-0677">Repeat</keyword>
<keyword id="KW-0793">Thylakoid</keyword>
<keyword id="KW-0802">TPR repeat</keyword>
<feature type="chain" id="PRO_0000325066" description="Photosystem I assembly protein Ycf3">
    <location>
        <begin position="1"/>
        <end position="168"/>
    </location>
</feature>
<feature type="repeat" description="TPR 1">
    <location>
        <begin position="35"/>
        <end position="68"/>
    </location>
</feature>
<feature type="repeat" description="TPR 2">
    <location>
        <begin position="72"/>
        <end position="105"/>
    </location>
</feature>
<feature type="repeat" description="TPR 3">
    <location>
        <begin position="120"/>
        <end position="153"/>
    </location>
</feature>
<sequence length="168" mass="19446">MPRSRINGNFIDKTFSIVANILLRIIPTTSGEKEAFTYYRDGMSAQSEGNYAEALQNYYEATRPEIDPYDRSYILYNIGLIHTSNGEHTKALEYYFRALERNPFLPQAFNNMAVICHYRGEQAILQGDSEIAEAWSDQAAEYWKQAIALTPGNYIEAHNWLKITRRFE</sequence>
<comment type="function">
    <text evidence="1">Essential for the assembly of the photosystem I (PSI) complex. May act as a chaperone-like factor to guide the assembly of the PSI subunits.</text>
</comment>
<comment type="subcellular location">
    <subcellularLocation>
        <location evidence="1">Plastid</location>
        <location evidence="1">Chloroplast thylakoid membrane</location>
        <topology evidence="1">Peripheral membrane protein</topology>
    </subcellularLocation>
</comment>
<comment type="similarity">
    <text evidence="1">Belongs to the Ycf3 family.</text>
</comment>
<name>YCF3_LEMMI</name>
<gene>
    <name evidence="1" type="primary">ycf3</name>
</gene>
<organism>
    <name type="scientific">Lemna minor</name>
    <name type="common">Common duckweed</name>
    <dbReference type="NCBI Taxonomy" id="4472"/>
    <lineage>
        <taxon>Eukaryota</taxon>
        <taxon>Viridiplantae</taxon>
        <taxon>Streptophyta</taxon>
        <taxon>Embryophyta</taxon>
        <taxon>Tracheophyta</taxon>
        <taxon>Spermatophyta</taxon>
        <taxon>Magnoliopsida</taxon>
        <taxon>Liliopsida</taxon>
        <taxon>Araceae</taxon>
        <taxon>Lemnoideae</taxon>
        <taxon>Lemna</taxon>
    </lineage>
</organism>
<evidence type="ECO:0000255" key="1">
    <source>
        <dbReference type="HAMAP-Rule" id="MF_00439"/>
    </source>
</evidence>
<dbReference type="EMBL" id="DQ400350">
    <property type="protein sequence ID" value="ABD48496.1"/>
    <property type="molecule type" value="Genomic_DNA"/>
</dbReference>
<dbReference type="RefSeq" id="YP_001595509.1">
    <property type="nucleotide sequence ID" value="NC_010109.1"/>
</dbReference>
<dbReference type="SMR" id="A9L997"/>
<dbReference type="GeneID" id="5787595"/>
<dbReference type="GO" id="GO:0009535">
    <property type="term" value="C:chloroplast thylakoid membrane"/>
    <property type="evidence" value="ECO:0007669"/>
    <property type="project" value="UniProtKB-SubCell"/>
</dbReference>
<dbReference type="GO" id="GO:0015979">
    <property type="term" value="P:photosynthesis"/>
    <property type="evidence" value="ECO:0007669"/>
    <property type="project" value="UniProtKB-UniRule"/>
</dbReference>
<dbReference type="FunFam" id="1.25.40.10:FF:000004">
    <property type="entry name" value="Photosystem I assembly protein Ycf3"/>
    <property type="match status" value="1"/>
</dbReference>
<dbReference type="Gene3D" id="1.25.40.10">
    <property type="entry name" value="Tetratricopeptide repeat domain"/>
    <property type="match status" value="1"/>
</dbReference>
<dbReference type="HAMAP" id="MF_00439">
    <property type="entry name" value="Ycf3"/>
    <property type="match status" value="1"/>
</dbReference>
<dbReference type="InterPro" id="IPR022818">
    <property type="entry name" value="PSI_Ycf3_assembly"/>
</dbReference>
<dbReference type="InterPro" id="IPR011990">
    <property type="entry name" value="TPR-like_helical_dom_sf"/>
</dbReference>
<dbReference type="InterPro" id="IPR019734">
    <property type="entry name" value="TPR_rpt"/>
</dbReference>
<dbReference type="InterPro" id="IPR051685">
    <property type="entry name" value="Ycf3/AcsC/BcsC/TPR_MFPF"/>
</dbReference>
<dbReference type="NCBIfam" id="NF002725">
    <property type="entry name" value="PRK02603.1"/>
    <property type="match status" value="1"/>
</dbReference>
<dbReference type="PANTHER" id="PTHR44943">
    <property type="entry name" value="CELLULOSE SYNTHASE OPERON PROTEIN C"/>
    <property type="match status" value="1"/>
</dbReference>
<dbReference type="PANTHER" id="PTHR44943:SF8">
    <property type="entry name" value="TPR REPEAT-CONTAINING PROTEIN MJ0263"/>
    <property type="match status" value="1"/>
</dbReference>
<dbReference type="Pfam" id="PF00515">
    <property type="entry name" value="TPR_1"/>
    <property type="match status" value="1"/>
</dbReference>
<dbReference type="SMART" id="SM00028">
    <property type="entry name" value="TPR"/>
    <property type="match status" value="3"/>
</dbReference>
<dbReference type="SUPFAM" id="SSF48452">
    <property type="entry name" value="TPR-like"/>
    <property type="match status" value="1"/>
</dbReference>
<dbReference type="PROSITE" id="PS50005">
    <property type="entry name" value="TPR"/>
    <property type="match status" value="3"/>
</dbReference>
<dbReference type="PROSITE" id="PS50293">
    <property type="entry name" value="TPR_REGION"/>
    <property type="match status" value="1"/>
</dbReference>